<organism>
    <name type="scientific">Neisseria meningitidis serogroup C / serotype 2a (strain ATCC 700532 / DSM 15464 / FAM18)</name>
    <dbReference type="NCBI Taxonomy" id="272831"/>
    <lineage>
        <taxon>Bacteria</taxon>
        <taxon>Pseudomonadati</taxon>
        <taxon>Pseudomonadota</taxon>
        <taxon>Betaproteobacteria</taxon>
        <taxon>Neisseriales</taxon>
        <taxon>Neisseriaceae</taxon>
        <taxon>Neisseria</taxon>
    </lineage>
</organism>
<evidence type="ECO:0000255" key="1">
    <source>
        <dbReference type="HAMAP-Rule" id="MF_00251"/>
    </source>
</evidence>
<evidence type="ECO:0000305" key="2"/>
<comment type="similarity">
    <text evidence="1">Belongs to the bacterial ribosomal protein bL36 family.</text>
</comment>
<gene>
    <name evidence="1" type="primary">rpmJ1</name>
    <name type="ordered locus">NMC0154</name>
</gene>
<name>RL361_NEIMF</name>
<sequence length="37" mass="4489">MRVQPSVKKICRNCKIIRRNRVVRVICTDLRHKQRQG</sequence>
<feature type="chain" id="PRO_0000344697" description="Large ribosomal subunit protein bL36A">
    <location>
        <begin position="1"/>
        <end position="37"/>
    </location>
</feature>
<protein>
    <recommendedName>
        <fullName evidence="1">Large ribosomal subunit protein bL36A</fullName>
    </recommendedName>
    <alternativeName>
        <fullName evidence="2">50S ribosomal protein L36 1</fullName>
    </alternativeName>
</protein>
<accession>A1KRJ5</accession>
<keyword id="KW-0687">Ribonucleoprotein</keyword>
<keyword id="KW-0689">Ribosomal protein</keyword>
<proteinExistence type="inferred from homology"/>
<dbReference type="EMBL" id="AM421808">
    <property type="protein sequence ID" value="CAM09473.1"/>
    <property type="molecule type" value="Genomic_DNA"/>
</dbReference>
<dbReference type="SMR" id="A1KRJ5"/>
<dbReference type="KEGG" id="nmc:NMC0154"/>
<dbReference type="HOGENOM" id="CLU_135723_6_2_4"/>
<dbReference type="Proteomes" id="UP000002286">
    <property type="component" value="Chromosome"/>
</dbReference>
<dbReference type="GO" id="GO:0005737">
    <property type="term" value="C:cytoplasm"/>
    <property type="evidence" value="ECO:0007669"/>
    <property type="project" value="UniProtKB-ARBA"/>
</dbReference>
<dbReference type="GO" id="GO:1990904">
    <property type="term" value="C:ribonucleoprotein complex"/>
    <property type="evidence" value="ECO:0007669"/>
    <property type="project" value="UniProtKB-KW"/>
</dbReference>
<dbReference type="GO" id="GO:0005840">
    <property type="term" value="C:ribosome"/>
    <property type="evidence" value="ECO:0007669"/>
    <property type="project" value="UniProtKB-KW"/>
</dbReference>
<dbReference type="GO" id="GO:0003735">
    <property type="term" value="F:structural constituent of ribosome"/>
    <property type="evidence" value="ECO:0007669"/>
    <property type="project" value="InterPro"/>
</dbReference>
<dbReference type="GO" id="GO:0006412">
    <property type="term" value="P:translation"/>
    <property type="evidence" value="ECO:0007669"/>
    <property type="project" value="UniProtKB-UniRule"/>
</dbReference>
<dbReference type="HAMAP" id="MF_00251">
    <property type="entry name" value="Ribosomal_bL36"/>
    <property type="match status" value="1"/>
</dbReference>
<dbReference type="InterPro" id="IPR000473">
    <property type="entry name" value="Ribosomal_bL36"/>
</dbReference>
<dbReference type="InterPro" id="IPR035977">
    <property type="entry name" value="Ribosomal_bL36_sp"/>
</dbReference>
<dbReference type="NCBIfam" id="TIGR01022">
    <property type="entry name" value="rpmJ_bact"/>
    <property type="match status" value="1"/>
</dbReference>
<dbReference type="PANTHER" id="PTHR42888">
    <property type="entry name" value="50S RIBOSOMAL PROTEIN L36, CHLOROPLASTIC"/>
    <property type="match status" value="1"/>
</dbReference>
<dbReference type="PANTHER" id="PTHR42888:SF1">
    <property type="entry name" value="LARGE RIBOSOMAL SUBUNIT PROTEIN BL36C"/>
    <property type="match status" value="1"/>
</dbReference>
<dbReference type="Pfam" id="PF00444">
    <property type="entry name" value="Ribosomal_L36"/>
    <property type="match status" value="1"/>
</dbReference>
<dbReference type="SUPFAM" id="SSF57840">
    <property type="entry name" value="Ribosomal protein L36"/>
    <property type="match status" value="1"/>
</dbReference>
<dbReference type="PROSITE" id="PS00828">
    <property type="entry name" value="RIBOSOMAL_L36"/>
    <property type="match status" value="1"/>
</dbReference>
<reference key="1">
    <citation type="journal article" date="2007" name="PLoS Genet.">
        <title>Meningococcal genetic variation mechanisms viewed through comparative analysis of serogroup C strain FAM18.</title>
        <authorList>
            <person name="Bentley S.D."/>
            <person name="Vernikos G.S."/>
            <person name="Snyder L.A.S."/>
            <person name="Churcher C."/>
            <person name="Arrowsmith C."/>
            <person name="Chillingworth T."/>
            <person name="Cronin A."/>
            <person name="Davis P.H."/>
            <person name="Holroyd N.E."/>
            <person name="Jagels K."/>
            <person name="Maddison M."/>
            <person name="Moule S."/>
            <person name="Rabbinowitsch E."/>
            <person name="Sharp S."/>
            <person name="Unwin L."/>
            <person name="Whitehead S."/>
            <person name="Quail M.A."/>
            <person name="Achtman M."/>
            <person name="Barrell B.G."/>
            <person name="Saunders N.J."/>
            <person name="Parkhill J."/>
        </authorList>
    </citation>
    <scope>NUCLEOTIDE SEQUENCE [LARGE SCALE GENOMIC DNA]</scope>
    <source>
        <strain>ATCC 700532 / DSM 15464 / FAM18</strain>
    </source>
</reference>